<name>ESPG1_MYCTU</name>
<protein>
    <recommendedName>
        <fullName evidence="8">ESX-1 secretion-associated protein EspG1</fullName>
    </recommendedName>
</protein>
<organism>
    <name type="scientific">Mycobacterium tuberculosis (strain ATCC 25618 / H37Rv)</name>
    <dbReference type="NCBI Taxonomy" id="83332"/>
    <lineage>
        <taxon>Bacteria</taxon>
        <taxon>Bacillati</taxon>
        <taxon>Actinomycetota</taxon>
        <taxon>Actinomycetes</taxon>
        <taxon>Mycobacteriales</taxon>
        <taxon>Mycobacteriaceae</taxon>
        <taxon>Mycobacterium</taxon>
        <taxon>Mycobacterium tuberculosis complex</taxon>
    </lineage>
</organism>
<feature type="chain" id="PRO_0000394152" description="ESX-1 secretion-associated protein EspG1">
    <location>
        <begin position="1"/>
        <end position="283"/>
    </location>
</feature>
<proteinExistence type="evidence at protein level"/>
<gene>
    <name evidence="7" type="primary">espG1</name>
    <name type="synonym">snm5</name>
    <name type="ordered locus">Rv3866</name>
</gene>
<evidence type="ECO:0000250" key="1">
    <source>
        <dbReference type="UniProtKB" id="B2HMS9"/>
    </source>
</evidence>
<evidence type="ECO:0000250" key="2">
    <source>
        <dbReference type="UniProtKB" id="B2HSU5"/>
    </source>
</evidence>
<evidence type="ECO:0000250" key="3">
    <source>
        <dbReference type="UniProtKB" id="O53943"/>
    </source>
</evidence>
<evidence type="ECO:0000269" key="4">
    <source>
    </source>
</evidence>
<evidence type="ECO:0000269" key="5">
    <source>
    </source>
</evidence>
<evidence type="ECO:0000269" key="6">
    <source>
    </source>
</evidence>
<evidence type="ECO:0000303" key="7">
    <source>
    </source>
</evidence>
<evidence type="ECO:0000303" key="8">
    <source>
    </source>
</evidence>
<evidence type="ECO:0000305" key="9"/>
<accession>P96210</accession>
<accession>L0TGZ4</accession>
<comment type="function">
    <text evidence="3">Specific chaperone for cognate PE/PPE proteins. Plays an important role in preventing aggregation of PE/PPE dimers.</text>
</comment>
<comment type="subunit">
    <text evidence="1 5">Interacts specifically with ESX-1-dependent PE/PPE proteins (By similarity). Interacts with PPE68 (PubMed:17433643).</text>
</comment>
<comment type="subcellular location">
    <subcellularLocation>
        <location evidence="2">Cytoplasm</location>
    </subcellularLocation>
</comment>
<comment type="disruption phenotype">
    <text evidence="4 6">Inactivation leads to the attenuation of the recombinant strain, in spite of strong EsxA (ESAT-6) secretion and generation of specific T-cell responses. Mutant has lower amounts of PPE68.</text>
</comment>
<comment type="similarity">
    <text evidence="9">Belongs to the EspG family.</text>
</comment>
<reference key="1">
    <citation type="journal article" date="1998" name="Nature">
        <title>Deciphering the biology of Mycobacterium tuberculosis from the complete genome sequence.</title>
        <authorList>
            <person name="Cole S.T."/>
            <person name="Brosch R."/>
            <person name="Parkhill J."/>
            <person name="Garnier T."/>
            <person name="Churcher C.M."/>
            <person name="Harris D.E."/>
            <person name="Gordon S.V."/>
            <person name="Eiglmeier K."/>
            <person name="Gas S."/>
            <person name="Barry C.E. III"/>
            <person name="Tekaia F."/>
            <person name="Badcock K."/>
            <person name="Basham D."/>
            <person name="Brown D."/>
            <person name="Chillingworth T."/>
            <person name="Connor R."/>
            <person name="Davies R.M."/>
            <person name="Devlin K."/>
            <person name="Feltwell T."/>
            <person name="Gentles S."/>
            <person name="Hamlin N."/>
            <person name="Holroyd S."/>
            <person name="Hornsby T."/>
            <person name="Jagels K."/>
            <person name="Krogh A."/>
            <person name="McLean J."/>
            <person name="Moule S."/>
            <person name="Murphy L.D."/>
            <person name="Oliver S."/>
            <person name="Osborne J."/>
            <person name="Quail M.A."/>
            <person name="Rajandream M.A."/>
            <person name="Rogers J."/>
            <person name="Rutter S."/>
            <person name="Seeger K."/>
            <person name="Skelton S."/>
            <person name="Squares S."/>
            <person name="Squares R."/>
            <person name="Sulston J.E."/>
            <person name="Taylor K."/>
            <person name="Whitehead S."/>
            <person name="Barrell B.G."/>
        </authorList>
    </citation>
    <scope>NUCLEOTIDE SEQUENCE [LARGE SCALE GENOMIC DNA]</scope>
    <source>
        <strain>ATCC 25618 / H37Rv</strain>
    </source>
</reference>
<reference key="2">
    <citation type="journal article" date="2006" name="Infect. Immun.">
        <title>Dissection of ESAT-6 system 1 of Mycobacterium tuberculosis and impact on immunogenicity and virulence.</title>
        <authorList>
            <person name="Brodin P."/>
            <person name="Majlessi L."/>
            <person name="Marsollier L."/>
            <person name="de Jonge M.I."/>
            <person name="Bottai D."/>
            <person name="Demangel C."/>
            <person name="Hinds J."/>
            <person name="Neyrolles O."/>
            <person name="Butcher P.D."/>
            <person name="Leclerc C."/>
            <person name="Cole S.T."/>
            <person name="Brosch R."/>
        </authorList>
    </citation>
    <scope>DISRUPTION PHENOTYPE</scope>
</reference>
<reference key="3">
    <citation type="journal article" date="2009" name="Microbiol. Res.">
        <title>A protein linkage map of the ESAT-6 secretion system 1 (ESX-1) of Mycobacterium tuberculosis.</title>
        <authorList>
            <person name="Teutschbein J."/>
            <person name="Schumann G."/>
            <person name="Mollmann U."/>
            <person name="Grabley S."/>
            <person name="Cole S.T."/>
            <person name="Munder T."/>
        </authorList>
    </citation>
    <scope>INTERACTION WITH PPE68</scope>
</reference>
<reference key="4">
    <citation type="journal article" date="2009" name="PLoS Pathog.">
        <title>Systematic genetic nomenclature for type VII secretion systems.</title>
        <authorList>
            <person name="Bitter W."/>
            <person name="Houben E.N."/>
            <person name="Bottai D."/>
            <person name="Brodin P."/>
            <person name="Brown E.J."/>
            <person name="Cox J.S."/>
            <person name="Derbyshire K."/>
            <person name="Fortune S.M."/>
            <person name="Gao L.Y."/>
            <person name="Liu J."/>
            <person name="Gey van Pittius N.C."/>
            <person name="Pym A.S."/>
            <person name="Rubin E.J."/>
            <person name="Sherman D.R."/>
            <person name="Cole S.T."/>
            <person name="Brosch R."/>
        </authorList>
    </citation>
    <scope>NOMENCLATURE</scope>
</reference>
<reference key="5">
    <citation type="journal article" date="2011" name="J. Infect. Dis.">
        <title>ESAT-6 secretion-independent impact of ESX-1 genes espF and espG1 on virulence of Mycobacterium tuberculosis.</title>
        <authorList>
            <person name="Bottai D."/>
            <person name="Majlessi L."/>
            <person name="Simeone R."/>
            <person name="Frigui W."/>
            <person name="Laurent C."/>
            <person name="Lenormand P."/>
            <person name="Chen J."/>
            <person name="Rosenkrands I."/>
            <person name="Huerre M."/>
            <person name="Leclerc C."/>
            <person name="Cole S.T."/>
            <person name="Brosch R."/>
        </authorList>
    </citation>
    <scope>DISRUPTION PHENOTYPE</scope>
</reference>
<reference key="6">
    <citation type="journal article" date="2011" name="Mol. Cell. Proteomics">
        <title>Proteogenomic analysis of Mycobacterium tuberculosis by high resolution mass spectrometry.</title>
        <authorList>
            <person name="Kelkar D.S."/>
            <person name="Kumar D."/>
            <person name="Kumar P."/>
            <person name="Balakrishnan L."/>
            <person name="Muthusamy B."/>
            <person name="Yadav A.K."/>
            <person name="Shrivastava P."/>
            <person name="Marimuthu A."/>
            <person name="Anand S."/>
            <person name="Sundaram H."/>
            <person name="Kingsbury R."/>
            <person name="Harsha H.C."/>
            <person name="Nair B."/>
            <person name="Prasad T.S."/>
            <person name="Chauhan D.S."/>
            <person name="Katoch K."/>
            <person name="Katoch V.M."/>
            <person name="Kumar P."/>
            <person name="Chaerkady R."/>
            <person name="Ramachandran S."/>
            <person name="Dash D."/>
            <person name="Pandey A."/>
        </authorList>
    </citation>
    <scope>IDENTIFICATION BY MASS SPECTROMETRY [LARGE SCALE ANALYSIS]</scope>
    <source>
        <strain>ATCC 25618 / H37Rv</strain>
    </source>
</reference>
<keyword id="KW-0143">Chaperone</keyword>
<keyword id="KW-0963">Cytoplasm</keyword>
<keyword id="KW-1185">Reference proteome</keyword>
<sequence length="283" mass="30064">MTGPSAAGRAGTADNVVGVEVTIDGMLVIADRLHLVDFPVTLGIRPNIPQEDLRDIVWEQVQRDLTAQGVLDLHGEPQPTVAEMVETLGRPDRTLEGRWWRRDIGGVMVRFVVCRRGDRHVIAARDGDMLVLQLVAPQVGLAGMVTAVLGPAEPANVEPLTGVATELAECTTASQLTQYGIAPASARVYAEIVGNPTGWVEIVASQRHPGGTTTQTDAAAGVLDSKLGRLVSLPRRVGGDLYGSFLPGTQQNLERALDGLLELLPAGAWLDHTSDHAQASSRG</sequence>
<dbReference type="EMBL" id="AL123456">
    <property type="protein sequence ID" value="CCP46695.1"/>
    <property type="molecule type" value="Genomic_DNA"/>
</dbReference>
<dbReference type="PIR" id="G70656">
    <property type="entry name" value="G70656"/>
</dbReference>
<dbReference type="RefSeq" id="NP_218383.1">
    <property type="nucleotide sequence ID" value="NC_000962.3"/>
</dbReference>
<dbReference type="RefSeq" id="WP_003399839.1">
    <property type="nucleotide sequence ID" value="NZ_NVQJ01000074.1"/>
</dbReference>
<dbReference type="SMR" id="P96210"/>
<dbReference type="STRING" id="83332.Rv3866"/>
<dbReference type="PaxDb" id="83332-Rv3866"/>
<dbReference type="DNASU" id="886200"/>
<dbReference type="GeneID" id="886200"/>
<dbReference type="KEGG" id="mtu:Rv3866"/>
<dbReference type="KEGG" id="mtv:RVBD_3866"/>
<dbReference type="TubercuList" id="Rv3866"/>
<dbReference type="eggNOG" id="ENOG502ZNK2">
    <property type="taxonomic scope" value="Bacteria"/>
</dbReference>
<dbReference type="InParanoid" id="P96210"/>
<dbReference type="OrthoDB" id="4685535at2"/>
<dbReference type="Proteomes" id="UP000001584">
    <property type="component" value="Chromosome"/>
</dbReference>
<dbReference type="GO" id="GO:0005737">
    <property type="term" value="C:cytoplasm"/>
    <property type="evidence" value="ECO:0007669"/>
    <property type="project" value="UniProtKB-SubCell"/>
</dbReference>
<dbReference type="GO" id="GO:0005886">
    <property type="term" value="C:plasma membrane"/>
    <property type="evidence" value="ECO:0007005"/>
    <property type="project" value="MTBBASE"/>
</dbReference>
<dbReference type="GO" id="GO:0001666">
    <property type="term" value="P:response to hypoxia"/>
    <property type="evidence" value="ECO:0000270"/>
    <property type="project" value="MTBBASE"/>
</dbReference>
<dbReference type="InterPro" id="IPR025734">
    <property type="entry name" value="EspG"/>
</dbReference>
<dbReference type="Pfam" id="PF14011">
    <property type="entry name" value="ESX-1_EspG"/>
    <property type="match status" value="1"/>
</dbReference>